<dbReference type="EMBL" id="CP001657">
    <property type="protein sequence ID" value="ACT12799.1"/>
    <property type="molecule type" value="Genomic_DNA"/>
</dbReference>
<dbReference type="SMR" id="C6DF90"/>
<dbReference type="STRING" id="561230.PC1_1758"/>
<dbReference type="KEGG" id="pct:PC1_1758"/>
<dbReference type="eggNOG" id="COG5581">
    <property type="taxonomic scope" value="Bacteria"/>
</dbReference>
<dbReference type="HOGENOM" id="CLU_086025_0_0_6"/>
<dbReference type="Proteomes" id="UP000002736">
    <property type="component" value="Chromosome"/>
</dbReference>
<dbReference type="GO" id="GO:0009425">
    <property type="term" value="C:bacterial-type flagellum basal body"/>
    <property type="evidence" value="ECO:0007669"/>
    <property type="project" value="UniProtKB-SubCell"/>
</dbReference>
<dbReference type="GO" id="GO:0035438">
    <property type="term" value="F:cyclic-di-GMP binding"/>
    <property type="evidence" value="ECO:0007669"/>
    <property type="project" value="UniProtKB-UniRule"/>
</dbReference>
<dbReference type="GO" id="GO:0071973">
    <property type="term" value="P:bacterial-type flagellum-dependent cell motility"/>
    <property type="evidence" value="ECO:0007669"/>
    <property type="project" value="UniProtKB-UniRule"/>
</dbReference>
<dbReference type="GO" id="GO:0071945">
    <property type="term" value="P:regulation of bacterial-type flagellum-dependent cell motility by regulation of motor speed"/>
    <property type="evidence" value="ECO:0007669"/>
    <property type="project" value="UniProtKB-UniRule"/>
</dbReference>
<dbReference type="Gene3D" id="2.30.110.10">
    <property type="entry name" value="Electron Transport, Fmn-binding Protein, Chain A"/>
    <property type="match status" value="1"/>
</dbReference>
<dbReference type="Gene3D" id="2.40.10.220">
    <property type="entry name" value="predicted glycosyltransferase like domains"/>
    <property type="match status" value="1"/>
</dbReference>
<dbReference type="HAMAP" id="MF_01457">
    <property type="entry name" value="YcgR"/>
    <property type="match status" value="1"/>
</dbReference>
<dbReference type="InterPro" id="IPR009875">
    <property type="entry name" value="PilZ_domain"/>
</dbReference>
<dbReference type="InterPro" id="IPR012349">
    <property type="entry name" value="Split_barrel_FMN-bd"/>
</dbReference>
<dbReference type="InterPro" id="IPR023787">
    <property type="entry name" value="T3SS_YcgR"/>
</dbReference>
<dbReference type="InterPro" id="IPR009926">
    <property type="entry name" value="T3SS_YcgR_PilZN"/>
</dbReference>
<dbReference type="Pfam" id="PF07238">
    <property type="entry name" value="PilZ"/>
    <property type="match status" value="1"/>
</dbReference>
<dbReference type="Pfam" id="PF07317">
    <property type="entry name" value="PilZN"/>
    <property type="match status" value="1"/>
</dbReference>
<organism>
    <name type="scientific">Pectobacterium carotovorum subsp. carotovorum (strain PC1)</name>
    <dbReference type="NCBI Taxonomy" id="561230"/>
    <lineage>
        <taxon>Bacteria</taxon>
        <taxon>Pseudomonadati</taxon>
        <taxon>Pseudomonadota</taxon>
        <taxon>Gammaproteobacteria</taxon>
        <taxon>Enterobacterales</taxon>
        <taxon>Pectobacteriaceae</taxon>
        <taxon>Pectobacterium</taxon>
    </lineage>
</organism>
<proteinExistence type="inferred from homology"/>
<accession>C6DF90</accession>
<evidence type="ECO:0000255" key="1">
    <source>
        <dbReference type="HAMAP-Rule" id="MF_01457"/>
    </source>
</evidence>
<protein>
    <recommendedName>
        <fullName evidence="1">Flagellar brake protein YcgR</fullName>
    </recommendedName>
    <alternativeName>
        <fullName evidence="1">Cyclic di-GMP binding protein YcgR</fullName>
    </alternativeName>
</protein>
<comment type="function">
    <text evidence="1">Acts as a flagellar brake, regulating swimming and swarming in a bis-(3'-5') cyclic diguanylic acid (c-di-GMP)-dependent manner. Binds 1 c-di-GMP dimer per subunit. Increasing levels of c-di-GMP lead to decreased motility.</text>
</comment>
<comment type="subunit">
    <text evidence="1">Monomer. Interacts with the flagellar basal bodies.</text>
</comment>
<comment type="subcellular location">
    <subcellularLocation>
        <location evidence="1">Bacterial flagellum basal body</location>
    </subcellularLocation>
</comment>
<comment type="similarity">
    <text evidence="1">Belongs to the YcgR family.</text>
</comment>
<reference key="1">
    <citation type="submission" date="2009-07" db="EMBL/GenBank/DDBJ databases">
        <title>Complete sequence of Pectobacterium carotovorum subsp. carotovorum PC1.</title>
        <authorList>
            <consortium name="US DOE Joint Genome Institute"/>
            <person name="Lucas S."/>
            <person name="Copeland A."/>
            <person name="Lapidus A."/>
            <person name="Glavina del Rio T."/>
            <person name="Tice H."/>
            <person name="Bruce D."/>
            <person name="Goodwin L."/>
            <person name="Pitluck S."/>
            <person name="Munk A.C."/>
            <person name="Brettin T."/>
            <person name="Detter J.C."/>
            <person name="Han C."/>
            <person name="Tapia R."/>
            <person name="Larimer F."/>
            <person name="Land M."/>
            <person name="Hauser L."/>
            <person name="Kyrpides N."/>
            <person name="Mikhailova N."/>
            <person name="Balakrishnan V."/>
            <person name="Glasner J."/>
            <person name="Perna N.T."/>
        </authorList>
    </citation>
    <scope>NUCLEOTIDE SEQUENCE [LARGE SCALE GENOMIC DNA]</scope>
    <source>
        <strain>PC1</strain>
    </source>
</reference>
<feature type="chain" id="PRO_0000395281" description="Flagellar brake protein YcgR">
    <location>
        <begin position="1"/>
        <end position="255"/>
    </location>
</feature>
<feature type="domain" description="PilZ" evidence="1">
    <location>
        <begin position="122"/>
        <end position="240"/>
    </location>
</feature>
<gene>
    <name evidence="1" type="primary">ycgR</name>
    <name type="ordered locus">PC1_1758</name>
</gene>
<name>YCGR_PECCP</name>
<keyword id="KW-0975">Bacterial flagellum</keyword>
<keyword id="KW-0973">c-di-GMP</keyword>
<keyword id="KW-0547">Nucleotide-binding</keyword>
<sequence length="255" mass="28979">MMVEMKAVNENLKEQFVKRNKLAICATLRELKKNDTSLMVHHSHGQFISKILDVVPDNNLFVFDLGGIERENNRALYAGSLSFVAEPAGAKVEFNAEIAKTVTYDGLPAFSAQIPELLYLIQRRTYFRINTPLWPPLTCRGELPDESVFLFTIKDLSLGGLSLYTDRDTTGLLTEGDIIKSVEMDLADHGFFCVDLQFVGQAMVKVVDNKGEVQLTQRLSFKFPSLNAAQERDLQQVIFELERLQNEKKKRFQEL</sequence>